<keyword id="KW-1185">Reference proteome</keyword>
<name>Y1605_ACTP2</name>
<feature type="chain" id="PRO_0000339779" description="UPF0597 protein APL_1605">
    <location>
        <begin position="1"/>
        <end position="432"/>
    </location>
</feature>
<comment type="similarity">
    <text evidence="1">Belongs to the UPF0597 family.</text>
</comment>
<reference key="1">
    <citation type="journal article" date="2008" name="J. Bacteriol.">
        <title>The complete genome sequence of Actinobacillus pleuropneumoniae L20 (serotype 5b).</title>
        <authorList>
            <person name="Foote S.J."/>
            <person name="Bosse J.T."/>
            <person name="Bouevitch A.B."/>
            <person name="Langford P.R."/>
            <person name="Young N.M."/>
            <person name="Nash J.H.E."/>
        </authorList>
    </citation>
    <scope>NUCLEOTIDE SEQUENCE [LARGE SCALE GENOMIC DNA]</scope>
    <source>
        <strain>L20</strain>
    </source>
</reference>
<accession>A3N2Q3</accession>
<protein>
    <recommendedName>
        <fullName evidence="1">UPF0597 protein APL_1605</fullName>
    </recommendedName>
</protein>
<dbReference type="EMBL" id="CP000569">
    <property type="protein sequence ID" value="ABN74689.1"/>
    <property type="molecule type" value="Genomic_DNA"/>
</dbReference>
<dbReference type="RefSeq" id="WP_009874587.1">
    <property type="nucleotide sequence ID" value="NC_009053.1"/>
</dbReference>
<dbReference type="SMR" id="A3N2Q3"/>
<dbReference type="STRING" id="416269.APL_1605"/>
<dbReference type="EnsemblBacteria" id="ABN74689">
    <property type="protein sequence ID" value="ABN74689"/>
    <property type="gene ID" value="APL_1605"/>
</dbReference>
<dbReference type="KEGG" id="apl:APL_1605"/>
<dbReference type="PATRIC" id="fig|416269.6.peg.1671"/>
<dbReference type="eggNOG" id="COG3681">
    <property type="taxonomic scope" value="Bacteria"/>
</dbReference>
<dbReference type="HOGENOM" id="CLU_051840_0_0_6"/>
<dbReference type="Proteomes" id="UP000001432">
    <property type="component" value="Chromosome"/>
</dbReference>
<dbReference type="GO" id="GO:0080146">
    <property type="term" value="F:L-cysteine desulfhydrase activity"/>
    <property type="evidence" value="ECO:0007669"/>
    <property type="project" value="TreeGrafter"/>
</dbReference>
<dbReference type="GO" id="GO:0019450">
    <property type="term" value="P:L-cysteine catabolic process to pyruvate"/>
    <property type="evidence" value="ECO:0007669"/>
    <property type="project" value="TreeGrafter"/>
</dbReference>
<dbReference type="HAMAP" id="MF_01845">
    <property type="entry name" value="UPF0597"/>
    <property type="match status" value="1"/>
</dbReference>
<dbReference type="InterPro" id="IPR005130">
    <property type="entry name" value="Ser_deHydtase-like_asu"/>
</dbReference>
<dbReference type="InterPro" id="IPR021144">
    <property type="entry name" value="UPF0597"/>
</dbReference>
<dbReference type="PANTHER" id="PTHR30501">
    <property type="entry name" value="UPF0597 PROTEIN YHAM"/>
    <property type="match status" value="1"/>
</dbReference>
<dbReference type="PANTHER" id="PTHR30501:SF2">
    <property type="entry name" value="UPF0597 PROTEIN YHAM"/>
    <property type="match status" value="1"/>
</dbReference>
<dbReference type="Pfam" id="PF03313">
    <property type="entry name" value="SDH_alpha"/>
    <property type="match status" value="1"/>
</dbReference>
<dbReference type="PIRSF" id="PIRSF006054">
    <property type="entry name" value="UCP006054"/>
    <property type="match status" value="1"/>
</dbReference>
<evidence type="ECO:0000255" key="1">
    <source>
        <dbReference type="HAMAP-Rule" id="MF_01845"/>
    </source>
</evidence>
<sequence length="432" mass="45936">MKFKSELEQAIIATVQQEVVPALGCTEPVSLALAAAVARQYLGALPDRIEAKVSPNLMKNGMGVTVPGTGTVGLTMAAAIGAIGGDPNGGLEVLKHITNEQVALAKQMINDHKIEVSISDTEHILYSEATLFNTDQQVKVRIAAHHTNVIYIEKNGELLFSKPCVVESENAENVFANLNAKDIYDFSLNVELEKIRFIQQAAILNSALSQEGLNQDYGLHIGRTLQKQIGKGLISDDLLNRIVIETTAASDARMGGANLPAMSNSGSGNQGITATMPVVVVARHVAAGEEQLIRALFLSHLMAIYIHSKLPKLSALCAVTTAAMGSCAGVAWLLTGKFEAISMAISSMIGDISGIICDGAANSCAMKVSTSVSSSYKSILMALDDTQVTGNEGIVEHQIDRSINNLCAIASRSMQYTDRQVIEIMVSKPKSL</sequence>
<proteinExistence type="inferred from homology"/>
<organism>
    <name type="scientific">Actinobacillus pleuropneumoniae serotype 5b (strain L20)</name>
    <dbReference type="NCBI Taxonomy" id="416269"/>
    <lineage>
        <taxon>Bacteria</taxon>
        <taxon>Pseudomonadati</taxon>
        <taxon>Pseudomonadota</taxon>
        <taxon>Gammaproteobacteria</taxon>
        <taxon>Pasteurellales</taxon>
        <taxon>Pasteurellaceae</taxon>
        <taxon>Actinobacillus</taxon>
    </lineage>
</organism>
<gene>
    <name type="ordered locus">APL_1605</name>
</gene>